<organism>
    <name type="scientific">Bos taurus</name>
    <name type="common">Bovine</name>
    <dbReference type="NCBI Taxonomy" id="9913"/>
    <lineage>
        <taxon>Eukaryota</taxon>
        <taxon>Metazoa</taxon>
        <taxon>Chordata</taxon>
        <taxon>Craniata</taxon>
        <taxon>Vertebrata</taxon>
        <taxon>Euteleostomi</taxon>
        <taxon>Mammalia</taxon>
        <taxon>Eutheria</taxon>
        <taxon>Laurasiatheria</taxon>
        <taxon>Artiodactyla</taxon>
        <taxon>Ruminantia</taxon>
        <taxon>Pecora</taxon>
        <taxon>Bovidae</taxon>
        <taxon>Bovinae</taxon>
        <taxon>Bos</taxon>
    </lineage>
</organism>
<name>FADD_BOVIN</name>
<keyword id="KW-0053">Apoptosis</keyword>
<keyword id="KW-0963">Cytoplasm</keyword>
<keyword id="KW-0391">Immunity</keyword>
<keyword id="KW-0399">Innate immunity</keyword>
<keyword id="KW-0597">Phosphoprotein</keyword>
<keyword id="KW-1185">Reference proteome</keyword>
<sequence>MDPFLVLLHSVSAGLSSSDLTQLKFLCQNHISKRKLELAQSGLDLFTVLLQQNELNAEHTALLRELLCSLRRKDLLLRLDDFERGAAGGAAPEDRDLRAAMEIICDNVGKDWRRLARHLGVSDVKIEAIEEKYPRNLAEQVRELLRVWKNSTRENAAVSCLVGALRGCQLNVVADLIEEDQRARALQSGSANPGSFTAWDSGSAAPGAS</sequence>
<proteinExistence type="evidence at transcript level"/>
<protein>
    <recommendedName>
        <fullName evidence="7">FAS-associated death domain protein</fullName>
    </recommendedName>
    <alternativeName>
        <fullName evidence="7">FAS-associating death domain-containing protein</fullName>
    </alternativeName>
</protein>
<evidence type="ECO:0000250" key="1"/>
<evidence type="ECO:0000250" key="2">
    <source>
        <dbReference type="UniProtKB" id="Q13158"/>
    </source>
</evidence>
<evidence type="ECO:0000250" key="3">
    <source>
        <dbReference type="UniProtKB" id="Q61160"/>
    </source>
</evidence>
<evidence type="ECO:0000255" key="4">
    <source>
        <dbReference type="PROSITE-ProRule" id="PRU00064"/>
    </source>
</evidence>
<evidence type="ECO:0000255" key="5">
    <source>
        <dbReference type="PROSITE-ProRule" id="PRU00065"/>
    </source>
</evidence>
<evidence type="ECO:0000256" key="6">
    <source>
        <dbReference type="SAM" id="MobiDB-lite"/>
    </source>
</evidence>
<evidence type="ECO:0000303" key="7">
    <source>
    </source>
</evidence>
<comment type="function">
    <text evidence="2">Apoptotic adapter molecule that recruits caspases CASP8 or CASP10 to the activated FAS/CD95 or TNFRSF1A/TNFR-1 receptors. The resulting aggregate called the death-inducing signaling complex (DISC) performs CASP8 proteolytic activation. Active CASP8 initiates the subsequent cascade of caspases mediating apoptosis. Involved in interferon-mediated antiviral immune response, playing a role in the positive regulation of interferon signaling.</text>
</comment>
<comment type="subunit">
    <text evidence="2 3">Can self-associate. Component of the AIM2 PANoptosome complex, a multiprotein complex that drives inflammatory cell death (PANoptosis) (By similarity). Component of the death-induced signaling complex (DISC) composed of cell surface receptor FAS/CD95 or TNFRSF1A, adapter protein FADD and the CASP8 protease; recruitment of CASP8 to the complex is required for processing of CASP8 into the p18 and p10 subunits (By similarity). Interacts (via death domain) with FAS (via death domain). Interacts directly (via DED domain) with NOL3 (via CARD domain); inhibits death-inducing signaling complex (DISC) assembly by inhibiting the increase in FAS-FADD binding induced by FAS activation. Interacts with CFLAR, PEA15 and MBD4. When phosphorylated, part of a complex containing HIPK3 and FAS. May interact with MAVS/IPS1. Interacts with MOCV v-CFLAR protein and PIDD1. Interacts with RIPK1 and TRADD (By similarity). Interacts with stimulated TNFRSF10B (By similarity). Interacts with DDX24 (By similarity).</text>
</comment>
<comment type="subcellular location">
    <subcellularLocation>
        <location evidence="2">Cytoplasm</location>
    </subcellularLocation>
</comment>
<comment type="domain">
    <text evidence="2">Contains a death domain involved in the binding of the corresponding domain within Fas receptor.</text>
</comment>
<comment type="domain">
    <text evidence="2">The interaction between the FAS and FADD death domains is crucial for the formation of the death-inducing signaling complex (DISC).</text>
</comment>
<comment type="PTM">
    <text evidence="1">Phosphorylated.</text>
</comment>
<accession>Q645M6</accession>
<gene>
    <name evidence="7" type="primary">FADD</name>
</gene>
<reference key="1">
    <citation type="journal article" date="2005" name="Anim. Genet.">
        <title>Characterization of bovine FAS-associated death domain gene.</title>
        <authorList>
            <person name="Szperka M.E."/>
            <person name="Connor E.E."/>
            <person name="Paape M.J."/>
            <person name="Williams J.L."/>
            <person name="Bannerman D.D."/>
        </authorList>
    </citation>
    <scope>NUCLEOTIDE SEQUENCE [MRNA]</scope>
</reference>
<reference key="2">
    <citation type="submission" date="2006-08" db="EMBL/GenBank/DDBJ databases">
        <authorList>
            <consortium name="NIH - Mammalian Gene Collection (MGC) project"/>
        </authorList>
    </citation>
    <scope>NUCLEOTIDE SEQUENCE [LARGE SCALE MRNA]</scope>
    <source>
        <strain>Hereford</strain>
        <tissue>Fetal medulla</tissue>
    </source>
</reference>
<feature type="chain" id="PRO_0000281928" description="FAS-associated death domain protein">
    <location>
        <begin position="1"/>
        <end position="209"/>
    </location>
</feature>
<feature type="domain" description="DED" evidence="5">
    <location>
        <begin position="3"/>
        <end position="81"/>
    </location>
</feature>
<feature type="domain" description="Death" evidence="4">
    <location>
        <begin position="97"/>
        <end position="181"/>
    </location>
</feature>
<feature type="region of interest" description="Disordered" evidence="6">
    <location>
        <begin position="187"/>
        <end position="209"/>
    </location>
</feature>
<feature type="compositionally biased region" description="Polar residues" evidence="6">
    <location>
        <begin position="187"/>
        <end position="200"/>
    </location>
</feature>
<dbReference type="EMBL" id="AY725483">
    <property type="protein sequence ID" value="AAU20801.1"/>
    <property type="molecule type" value="mRNA"/>
</dbReference>
<dbReference type="EMBL" id="BC120180">
    <property type="protein sequence ID" value="AAI20181.1"/>
    <property type="molecule type" value="mRNA"/>
</dbReference>
<dbReference type="RefSeq" id="NP_001007817.1">
    <property type="nucleotide sequence ID" value="NM_001007816.1"/>
</dbReference>
<dbReference type="SMR" id="Q645M6"/>
<dbReference type="FunCoup" id="Q645M6">
    <property type="interactions" value="1192"/>
</dbReference>
<dbReference type="STRING" id="9913.ENSBTAP00000024322"/>
<dbReference type="PaxDb" id="9913-ENSBTAP00000024322"/>
<dbReference type="Ensembl" id="ENSBTAT00000024322.6">
    <property type="protein sequence ID" value="ENSBTAP00000024322.4"/>
    <property type="gene ID" value="ENSBTAG00000018274.6"/>
</dbReference>
<dbReference type="GeneID" id="493720"/>
<dbReference type="KEGG" id="bta:493720"/>
<dbReference type="CTD" id="8772"/>
<dbReference type="VEuPathDB" id="HostDB:ENSBTAG00000018274"/>
<dbReference type="VGNC" id="VGNC:28700">
    <property type="gene designation" value="FADD"/>
</dbReference>
<dbReference type="eggNOG" id="ENOG502S2RV">
    <property type="taxonomic scope" value="Eukaryota"/>
</dbReference>
<dbReference type="GeneTree" id="ENSGT00390000002105"/>
<dbReference type="HOGENOM" id="CLU_087961_0_0_1"/>
<dbReference type="InParanoid" id="Q645M6"/>
<dbReference type="OMA" id="CKMNLVA"/>
<dbReference type="OrthoDB" id="100767at2759"/>
<dbReference type="TreeFam" id="TF102046"/>
<dbReference type="Reactome" id="R-BTA-140534">
    <property type="pathway name" value="Caspase activation via Death Receptors in the presence of ligand"/>
</dbReference>
<dbReference type="Reactome" id="R-BTA-2562578">
    <property type="pathway name" value="TRIF-mediated programmed cell death"/>
</dbReference>
<dbReference type="Reactome" id="R-BTA-3371378">
    <property type="pathway name" value="Regulation by c-FLIP"/>
</dbReference>
<dbReference type="Reactome" id="R-BTA-5218900">
    <property type="pathway name" value="CASP8 activity is inhibited"/>
</dbReference>
<dbReference type="Reactome" id="R-BTA-5357786">
    <property type="pathway name" value="TNFR1-induced proapoptotic signaling"/>
</dbReference>
<dbReference type="Reactome" id="R-BTA-5357905">
    <property type="pathway name" value="Regulation of TNFR1 signaling"/>
</dbReference>
<dbReference type="Reactome" id="R-BTA-5675482">
    <property type="pathway name" value="Regulation of necroptotic cell death"/>
</dbReference>
<dbReference type="Reactome" id="R-BTA-69416">
    <property type="pathway name" value="Dimerization of procaspase-8"/>
</dbReference>
<dbReference type="Reactome" id="R-BTA-75157">
    <property type="pathway name" value="FasL/ CD95L signaling"/>
</dbReference>
<dbReference type="Proteomes" id="UP000009136">
    <property type="component" value="Chromosome 29"/>
</dbReference>
<dbReference type="Bgee" id="ENSBTAG00000018274">
    <property type="expression patterns" value="Expressed in ileocecal valve and 109 other cell types or tissues"/>
</dbReference>
<dbReference type="GO" id="GO:0031265">
    <property type="term" value="C:CD95 death-inducing signaling complex"/>
    <property type="evidence" value="ECO:0000318"/>
    <property type="project" value="GO_Central"/>
</dbReference>
<dbReference type="GO" id="GO:0097342">
    <property type="term" value="C:ripoptosome"/>
    <property type="evidence" value="ECO:0000250"/>
    <property type="project" value="UniProtKB"/>
</dbReference>
<dbReference type="GO" id="GO:0089720">
    <property type="term" value="F:caspase binding"/>
    <property type="evidence" value="ECO:0000250"/>
    <property type="project" value="UniProtKB"/>
</dbReference>
<dbReference type="GO" id="GO:0035877">
    <property type="term" value="F:death effector domain binding"/>
    <property type="evidence" value="ECO:0007669"/>
    <property type="project" value="Ensembl"/>
</dbReference>
<dbReference type="GO" id="GO:0005123">
    <property type="term" value="F:death receptor binding"/>
    <property type="evidence" value="ECO:0000318"/>
    <property type="project" value="GO_Central"/>
</dbReference>
<dbReference type="GO" id="GO:0042802">
    <property type="term" value="F:identical protein binding"/>
    <property type="evidence" value="ECO:0007669"/>
    <property type="project" value="Ensembl"/>
</dbReference>
<dbReference type="GO" id="GO:0035591">
    <property type="term" value="F:signaling adaptor activity"/>
    <property type="evidence" value="ECO:0007669"/>
    <property type="project" value="Ensembl"/>
</dbReference>
<dbReference type="GO" id="GO:0006915">
    <property type="term" value="P:apoptotic process"/>
    <property type="evidence" value="ECO:0000250"/>
    <property type="project" value="UniProtKB"/>
</dbReference>
<dbReference type="GO" id="GO:0071260">
    <property type="term" value="P:cellular response to mechanical stimulus"/>
    <property type="evidence" value="ECO:0007669"/>
    <property type="project" value="Ensembl"/>
</dbReference>
<dbReference type="GO" id="GO:0071550">
    <property type="term" value="P:death-inducing signaling complex assembly"/>
    <property type="evidence" value="ECO:0007669"/>
    <property type="project" value="Ensembl"/>
</dbReference>
<dbReference type="GO" id="GO:0051607">
    <property type="term" value="P:defense response to virus"/>
    <property type="evidence" value="ECO:0007669"/>
    <property type="project" value="Ensembl"/>
</dbReference>
<dbReference type="GO" id="GO:0097191">
    <property type="term" value="P:extrinsic apoptotic signaling pathway"/>
    <property type="evidence" value="ECO:0000318"/>
    <property type="project" value="GO_Central"/>
</dbReference>
<dbReference type="GO" id="GO:0097192">
    <property type="term" value="P:extrinsic apoptotic signaling pathway in absence of ligand"/>
    <property type="evidence" value="ECO:0007669"/>
    <property type="project" value="Ensembl"/>
</dbReference>
<dbReference type="GO" id="GO:0008625">
    <property type="term" value="P:extrinsic apoptotic signaling pathway via death domain receptors"/>
    <property type="evidence" value="ECO:0000250"/>
    <property type="project" value="UniProtKB"/>
</dbReference>
<dbReference type="GO" id="GO:0045087">
    <property type="term" value="P:innate immune response"/>
    <property type="evidence" value="ECO:0007669"/>
    <property type="project" value="UniProtKB-KW"/>
</dbReference>
<dbReference type="GO" id="GO:0048535">
    <property type="term" value="P:lymph node development"/>
    <property type="evidence" value="ECO:0000250"/>
    <property type="project" value="UniProtKB"/>
</dbReference>
<dbReference type="GO" id="GO:0097049">
    <property type="term" value="P:motor neuron apoptotic process"/>
    <property type="evidence" value="ECO:0007669"/>
    <property type="project" value="Ensembl"/>
</dbReference>
<dbReference type="GO" id="GO:0097527">
    <property type="term" value="P:necroptotic signaling pathway"/>
    <property type="evidence" value="ECO:0007669"/>
    <property type="project" value="Ensembl"/>
</dbReference>
<dbReference type="GO" id="GO:0070236">
    <property type="term" value="P:negative regulation of activation-induced cell death of T cells"/>
    <property type="evidence" value="ECO:0000250"/>
    <property type="project" value="UniProtKB"/>
</dbReference>
<dbReference type="GO" id="GO:0060546">
    <property type="term" value="P:negative regulation of necroptotic process"/>
    <property type="evidence" value="ECO:0007669"/>
    <property type="project" value="Ensembl"/>
</dbReference>
<dbReference type="GO" id="GO:0042104">
    <property type="term" value="P:positive regulation of activated T cell proliferation"/>
    <property type="evidence" value="ECO:0000250"/>
    <property type="project" value="UniProtKB"/>
</dbReference>
<dbReference type="GO" id="GO:0002821">
    <property type="term" value="P:positive regulation of adaptive immune response"/>
    <property type="evidence" value="ECO:0000250"/>
    <property type="project" value="UniProtKB"/>
</dbReference>
<dbReference type="GO" id="GO:0043123">
    <property type="term" value="P:positive regulation of canonical NF-kappaB signal transduction"/>
    <property type="evidence" value="ECO:0007669"/>
    <property type="project" value="Ensembl"/>
</dbReference>
<dbReference type="GO" id="GO:2000454">
    <property type="term" value="P:positive regulation of CD8-positive, alpha-beta cytotoxic T cell extravasation"/>
    <property type="evidence" value="ECO:0000250"/>
    <property type="project" value="UniProtKB"/>
</dbReference>
<dbReference type="GO" id="GO:1900119">
    <property type="term" value="P:positive regulation of execution phase of apoptosis"/>
    <property type="evidence" value="ECO:0007669"/>
    <property type="project" value="Ensembl"/>
</dbReference>
<dbReference type="GO" id="GO:2001238">
    <property type="term" value="P:positive regulation of extrinsic apoptotic signaling pathway"/>
    <property type="evidence" value="ECO:0007669"/>
    <property type="project" value="Ensembl"/>
</dbReference>
<dbReference type="GO" id="GO:0045089">
    <property type="term" value="P:positive regulation of innate immune response"/>
    <property type="evidence" value="ECO:0000318"/>
    <property type="project" value="GO_Central"/>
</dbReference>
<dbReference type="GO" id="GO:0032757">
    <property type="term" value="P:positive regulation of interleukin-8 production"/>
    <property type="evidence" value="ECO:0007669"/>
    <property type="project" value="Ensembl"/>
</dbReference>
<dbReference type="GO" id="GO:0045651">
    <property type="term" value="P:positive regulation of macrophage differentiation"/>
    <property type="evidence" value="ECO:0007669"/>
    <property type="project" value="Ensembl"/>
</dbReference>
<dbReference type="GO" id="GO:0045862">
    <property type="term" value="P:positive regulation of proteolysis"/>
    <property type="evidence" value="ECO:0007669"/>
    <property type="project" value="Ensembl"/>
</dbReference>
<dbReference type="GO" id="GO:0001916">
    <property type="term" value="P:positive regulation of T cell mediated cytotoxicity"/>
    <property type="evidence" value="ECO:0000250"/>
    <property type="project" value="UniProtKB"/>
</dbReference>
<dbReference type="GO" id="GO:0045944">
    <property type="term" value="P:positive regulation of transcription by RNA polymerase II"/>
    <property type="evidence" value="ECO:0007669"/>
    <property type="project" value="Ensembl"/>
</dbReference>
<dbReference type="GO" id="GO:0032760">
    <property type="term" value="P:positive regulation of tumor necrosis factor production"/>
    <property type="evidence" value="ECO:0007669"/>
    <property type="project" value="Ensembl"/>
</dbReference>
<dbReference type="GO" id="GO:0060340">
    <property type="term" value="P:positive regulation of type I interferon-mediated signaling pathway"/>
    <property type="evidence" value="ECO:0007669"/>
    <property type="project" value="Ensembl"/>
</dbReference>
<dbReference type="GO" id="GO:0032729">
    <property type="term" value="P:positive regulation of type II interferon production"/>
    <property type="evidence" value="ECO:0000250"/>
    <property type="project" value="UniProtKB"/>
</dbReference>
<dbReference type="GO" id="GO:0048536">
    <property type="term" value="P:spleen development"/>
    <property type="evidence" value="ECO:0000250"/>
    <property type="project" value="UniProtKB"/>
</dbReference>
<dbReference type="GO" id="GO:0033077">
    <property type="term" value="P:T cell differentiation in thymus"/>
    <property type="evidence" value="ECO:0000250"/>
    <property type="project" value="UniProtKB"/>
</dbReference>
<dbReference type="GO" id="GO:0043029">
    <property type="term" value="P:T cell homeostasis"/>
    <property type="evidence" value="ECO:0000250"/>
    <property type="project" value="UniProtKB"/>
</dbReference>
<dbReference type="GO" id="GO:0048538">
    <property type="term" value="P:thymus development"/>
    <property type="evidence" value="ECO:0000250"/>
    <property type="project" value="UniProtKB"/>
</dbReference>
<dbReference type="GO" id="GO:0036462">
    <property type="term" value="P:TRAIL-activated apoptotic signaling pathway"/>
    <property type="evidence" value="ECO:0007669"/>
    <property type="project" value="Ensembl"/>
</dbReference>
<dbReference type="CDD" id="cd08306">
    <property type="entry name" value="Death_FADD"/>
    <property type="match status" value="1"/>
</dbReference>
<dbReference type="CDD" id="cd08336">
    <property type="entry name" value="DED_FADD"/>
    <property type="match status" value="1"/>
</dbReference>
<dbReference type="FunFam" id="1.10.533.10:FF:000059">
    <property type="entry name" value="Fas-associated via death domain"/>
    <property type="match status" value="1"/>
</dbReference>
<dbReference type="FunFam" id="1.10.533.10:FF:000062">
    <property type="entry name" value="Fas-associated via death domain"/>
    <property type="match status" value="1"/>
</dbReference>
<dbReference type="Gene3D" id="1.10.533.10">
    <property type="entry name" value="Death Domain, Fas"/>
    <property type="match status" value="2"/>
</dbReference>
<dbReference type="InterPro" id="IPR011029">
    <property type="entry name" value="DEATH-like_dom_sf"/>
</dbReference>
<dbReference type="InterPro" id="IPR000488">
    <property type="entry name" value="Death_dom"/>
</dbReference>
<dbReference type="InterPro" id="IPR001875">
    <property type="entry name" value="DED_dom"/>
</dbReference>
<dbReference type="InterPro" id="IPR016729">
    <property type="entry name" value="FADD"/>
</dbReference>
<dbReference type="InterPro" id="IPR049634">
    <property type="entry name" value="FADD_vert"/>
</dbReference>
<dbReference type="PANTHER" id="PTHR15077:SF10">
    <property type="entry name" value="FAS-ASSOCIATED DEATH DOMAIN PROTEIN"/>
    <property type="match status" value="1"/>
</dbReference>
<dbReference type="PANTHER" id="PTHR15077">
    <property type="entry name" value="FAS-ASSOCIATING DEATH DOMAIN-CONTAINING PROTEIN FADD"/>
    <property type="match status" value="1"/>
</dbReference>
<dbReference type="Pfam" id="PF00531">
    <property type="entry name" value="Death"/>
    <property type="match status" value="1"/>
</dbReference>
<dbReference type="Pfam" id="PF01335">
    <property type="entry name" value="DED"/>
    <property type="match status" value="1"/>
</dbReference>
<dbReference type="PIRSF" id="PIRSF018586">
    <property type="entry name" value="FADD"/>
    <property type="match status" value="1"/>
</dbReference>
<dbReference type="SMART" id="SM00005">
    <property type="entry name" value="DEATH"/>
    <property type="match status" value="1"/>
</dbReference>
<dbReference type="SMART" id="SM00031">
    <property type="entry name" value="DED"/>
    <property type="match status" value="1"/>
</dbReference>
<dbReference type="SUPFAM" id="SSF47986">
    <property type="entry name" value="DEATH domain"/>
    <property type="match status" value="1"/>
</dbReference>
<dbReference type="PROSITE" id="PS50017">
    <property type="entry name" value="DEATH_DOMAIN"/>
    <property type="match status" value="1"/>
</dbReference>
<dbReference type="PROSITE" id="PS50168">
    <property type="entry name" value="DED"/>
    <property type="match status" value="1"/>
</dbReference>